<name>METXS_JANMA</name>
<accession>A6SUC4</accession>
<dbReference type="EC" id="2.3.1.46" evidence="1"/>
<dbReference type="EMBL" id="CP000269">
    <property type="protein sequence ID" value="ABR88834.1"/>
    <property type="molecule type" value="Genomic_DNA"/>
</dbReference>
<dbReference type="RefSeq" id="WP_011979407.1">
    <property type="nucleotide sequence ID" value="NC_009659.1"/>
</dbReference>
<dbReference type="SMR" id="A6SUC4"/>
<dbReference type="STRING" id="375286.mma_0181"/>
<dbReference type="ESTHER" id="janma-metx">
    <property type="family name" value="Homoserine_transacetylase"/>
</dbReference>
<dbReference type="KEGG" id="mms:mma_0181"/>
<dbReference type="eggNOG" id="COG2021">
    <property type="taxonomic scope" value="Bacteria"/>
</dbReference>
<dbReference type="HOGENOM" id="CLU_028760_1_2_4"/>
<dbReference type="OrthoDB" id="9800754at2"/>
<dbReference type="UniPathway" id="UPA00051">
    <property type="reaction ID" value="UER00075"/>
</dbReference>
<dbReference type="Proteomes" id="UP000006388">
    <property type="component" value="Chromosome"/>
</dbReference>
<dbReference type="GO" id="GO:0005737">
    <property type="term" value="C:cytoplasm"/>
    <property type="evidence" value="ECO:0007669"/>
    <property type="project" value="UniProtKB-SubCell"/>
</dbReference>
<dbReference type="GO" id="GO:0004414">
    <property type="term" value="F:homoserine O-acetyltransferase activity"/>
    <property type="evidence" value="ECO:0007669"/>
    <property type="project" value="TreeGrafter"/>
</dbReference>
<dbReference type="GO" id="GO:0008899">
    <property type="term" value="F:homoserine O-succinyltransferase activity"/>
    <property type="evidence" value="ECO:0007669"/>
    <property type="project" value="UniProtKB-UniRule"/>
</dbReference>
<dbReference type="GO" id="GO:0009092">
    <property type="term" value="P:homoserine metabolic process"/>
    <property type="evidence" value="ECO:0007669"/>
    <property type="project" value="TreeGrafter"/>
</dbReference>
<dbReference type="GO" id="GO:0009086">
    <property type="term" value="P:methionine biosynthetic process"/>
    <property type="evidence" value="ECO:0007669"/>
    <property type="project" value="UniProtKB-UniRule"/>
</dbReference>
<dbReference type="FunFam" id="1.10.1740.110:FF:000001">
    <property type="entry name" value="Homoserine O-acetyltransferase"/>
    <property type="match status" value="1"/>
</dbReference>
<dbReference type="Gene3D" id="1.10.1740.110">
    <property type="match status" value="1"/>
</dbReference>
<dbReference type="Gene3D" id="3.40.50.1820">
    <property type="entry name" value="alpha/beta hydrolase"/>
    <property type="match status" value="1"/>
</dbReference>
<dbReference type="HAMAP" id="MF_00296">
    <property type="entry name" value="MetX_acyltransf"/>
    <property type="match status" value="1"/>
</dbReference>
<dbReference type="InterPro" id="IPR000073">
    <property type="entry name" value="AB_hydrolase_1"/>
</dbReference>
<dbReference type="InterPro" id="IPR029058">
    <property type="entry name" value="AB_hydrolase_fold"/>
</dbReference>
<dbReference type="InterPro" id="IPR008220">
    <property type="entry name" value="HAT_MetX-like"/>
</dbReference>
<dbReference type="NCBIfam" id="TIGR01392">
    <property type="entry name" value="homoserO_Ac_trn"/>
    <property type="match status" value="1"/>
</dbReference>
<dbReference type="NCBIfam" id="NF001209">
    <property type="entry name" value="PRK00175.1"/>
    <property type="match status" value="1"/>
</dbReference>
<dbReference type="PANTHER" id="PTHR32268">
    <property type="entry name" value="HOMOSERINE O-ACETYLTRANSFERASE"/>
    <property type="match status" value="1"/>
</dbReference>
<dbReference type="PANTHER" id="PTHR32268:SF11">
    <property type="entry name" value="HOMOSERINE O-ACETYLTRANSFERASE"/>
    <property type="match status" value="1"/>
</dbReference>
<dbReference type="Pfam" id="PF00561">
    <property type="entry name" value="Abhydrolase_1"/>
    <property type="match status" value="1"/>
</dbReference>
<dbReference type="PIRSF" id="PIRSF000443">
    <property type="entry name" value="Homoser_Ac_trans"/>
    <property type="match status" value="1"/>
</dbReference>
<dbReference type="SUPFAM" id="SSF53474">
    <property type="entry name" value="alpha/beta-Hydrolases"/>
    <property type="match status" value="1"/>
</dbReference>
<keyword id="KW-0012">Acyltransferase</keyword>
<keyword id="KW-0028">Amino-acid biosynthesis</keyword>
<keyword id="KW-0963">Cytoplasm</keyword>
<keyword id="KW-0486">Methionine biosynthesis</keyword>
<keyword id="KW-0808">Transferase</keyword>
<proteinExistence type="inferred from homology"/>
<protein>
    <recommendedName>
        <fullName evidence="1">Homoserine O-succinyltransferase</fullName>
        <shortName evidence="1">HST</shortName>
        <ecNumber evidence="1">2.3.1.46</ecNumber>
    </recommendedName>
    <alternativeName>
        <fullName evidence="1">Homoserine transsuccinylase</fullName>
        <shortName evidence="1">HTS</shortName>
    </alternativeName>
</protein>
<feature type="chain" id="PRO_1000078943" description="Homoserine O-succinyltransferase">
    <location>
        <begin position="1"/>
        <end position="385"/>
    </location>
</feature>
<feature type="domain" description="AB hydrolase-1" evidence="1">
    <location>
        <begin position="45"/>
        <end position="355"/>
    </location>
</feature>
<feature type="active site" description="Nucleophile" evidence="1">
    <location>
        <position position="151"/>
    </location>
</feature>
<feature type="active site" evidence="1">
    <location>
        <position position="316"/>
    </location>
</feature>
<feature type="active site" evidence="1">
    <location>
        <position position="349"/>
    </location>
</feature>
<feature type="binding site" evidence="1">
    <location>
        <position position="221"/>
    </location>
    <ligand>
        <name>substrate</name>
    </ligand>
</feature>
<feature type="binding site" evidence="1">
    <location>
        <position position="350"/>
    </location>
    <ligand>
        <name>substrate</name>
    </ligand>
</feature>
<feature type="site" description="Important for acyl-CoA specificity" evidence="1">
    <location>
        <position position="318"/>
    </location>
</feature>
<gene>
    <name evidence="1" type="primary">metXS</name>
    <name type="ordered locus">mma_0181</name>
</gene>
<sequence length="385" mass="42393">MTSIGIVSPQSMFFDTPLPLQSGAQITDYTLVYETYGTLNADHSNAVLVCHALNASHHVAGTYSEDAGTTGWWDNMVGPGKPLDTNKYFVIGVNNLGSCFGSTGPMHINPATGKQYGAHFPVVTVEDWVQSQARLADALGIKQFAAVMGGSLGGMQALAWSILFPERLRHCVVIASTPKLTAQNIAFDDVARQAILTDPDYHGGDFYAHGVVPKNGLRVARMLGHITYLSDDDMAAKFGRELRSGSYQFGFGIDFEIESYLRYQGDKFSTYFDANTYLLITKALDYFDPAKDFGGDLTKTLSNTRAKFLLVSFTTDWRFSPERSHEMVQALVNNNRTVTYAEIDAPHGHDAFLLDDQRYMNVVRSYFERAYEEIDGGSLKAGASA</sequence>
<organism>
    <name type="scientific">Janthinobacterium sp. (strain Marseille)</name>
    <name type="common">Minibacterium massiliensis</name>
    <dbReference type="NCBI Taxonomy" id="375286"/>
    <lineage>
        <taxon>Bacteria</taxon>
        <taxon>Pseudomonadati</taxon>
        <taxon>Pseudomonadota</taxon>
        <taxon>Betaproteobacteria</taxon>
        <taxon>Burkholderiales</taxon>
        <taxon>Oxalobacteraceae</taxon>
        <taxon>Janthinobacterium</taxon>
    </lineage>
</organism>
<comment type="function">
    <text evidence="1">Transfers a succinyl group from succinyl-CoA to L-homoserine, forming succinyl-L-homoserine.</text>
</comment>
<comment type="catalytic activity">
    <reaction evidence="1">
        <text>L-homoserine + succinyl-CoA = O-succinyl-L-homoserine + CoA</text>
        <dbReference type="Rhea" id="RHEA:22008"/>
        <dbReference type="ChEBI" id="CHEBI:57287"/>
        <dbReference type="ChEBI" id="CHEBI:57292"/>
        <dbReference type="ChEBI" id="CHEBI:57476"/>
        <dbReference type="ChEBI" id="CHEBI:57661"/>
        <dbReference type="EC" id="2.3.1.46"/>
    </reaction>
</comment>
<comment type="pathway">
    <text evidence="1">Amino-acid biosynthesis; L-methionine biosynthesis via de novo pathway; O-succinyl-L-homoserine from L-homoserine: step 1/1.</text>
</comment>
<comment type="subunit">
    <text evidence="1">Homodimer.</text>
</comment>
<comment type="subcellular location">
    <subcellularLocation>
        <location evidence="1">Cytoplasm</location>
    </subcellularLocation>
</comment>
<comment type="similarity">
    <text evidence="1">Belongs to the AB hydrolase superfamily. MetX family.</text>
</comment>
<evidence type="ECO:0000255" key="1">
    <source>
        <dbReference type="HAMAP-Rule" id="MF_00296"/>
    </source>
</evidence>
<reference key="1">
    <citation type="journal article" date="2007" name="PLoS Genet.">
        <title>Genome analysis of Minibacterium massiliensis highlights the convergent evolution of water-living bacteria.</title>
        <authorList>
            <person name="Audic S."/>
            <person name="Robert C."/>
            <person name="Campagna B."/>
            <person name="Parinello H."/>
            <person name="Claverie J.-M."/>
            <person name="Raoult D."/>
            <person name="Drancourt M."/>
        </authorList>
    </citation>
    <scope>NUCLEOTIDE SEQUENCE [LARGE SCALE GENOMIC DNA]</scope>
    <source>
        <strain>Marseille</strain>
    </source>
</reference>